<feature type="chain" id="PRO_0000385101" description="Uncharacterized protein ORF80">
    <location>
        <begin position="1"/>
        <end position="116"/>
    </location>
</feature>
<feature type="topological domain" description="Extracellular" evidence="1">
    <location>
        <begin position="1"/>
        <end position="46"/>
    </location>
</feature>
<feature type="transmembrane region" description="Helical" evidence="1">
    <location>
        <begin position="47"/>
        <end position="67"/>
    </location>
</feature>
<feature type="topological domain" description="Cytoplasmic" evidence="1">
    <location>
        <begin position="68"/>
        <end position="116"/>
    </location>
</feature>
<feature type="glycosylation site" description="N-linked (GlcNAc...) asparagine; by host" evidence="1">
    <location>
        <position position="4"/>
    </location>
</feature>
<feature type="glycosylation site" description="N-linked (GlcNAc...) asparagine; by host" evidence="1">
    <location>
        <position position="12"/>
    </location>
</feature>
<gene>
    <name type="ORF">ORF80</name>
</gene>
<reference key="1">
    <citation type="journal article" date="2005" name="J. Gen. Virol.">
        <title>A novel class of herpesvirus with bivalve hosts.</title>
        <authorList>
            <person name="Davison A.J."/>
            <person name="Trus B.L."/>
            <person name="Cheng N."/>
            <person name="Steven A.C."/>
            <person name="Watson M.S."/>
            <person name="Cunningham C."/>
            <person name="Le Deuff R.M."/>
            <person name="Renault T."/>
        </authorList>
    </citation>
    <scope>NUCLEOTIDE SEQUENCE [LARGE SCALE GENOMIC DNA]</scope>
</reference>
<evidence type="ECO:0000255" key="1"/>
<evidence type="ECO:0000305" key="2"/>
<protein>
    <recommendedName>
        <fullName>Uncharacterized protein ORF80</fullName>
    </recommendedName>
</protein>
<accession>Q6R7E9</accession>
<dbReference type="EMBL" id="AY509253">
    <property type="protein sequence ID" value="AAS00966.1"/>
    <property type="molecule type" value="Genomic_DNA"/>
</dbReference>
<dbReference type="RefSeq" id="YP_024619.1">
    <property type="nucleotide sequence ID" value="NC_005881.2"/>
</dbReference>
<dbReference type="SMR" id="Q6R7E9"/>
<dbReference type="KEGG" id="vg:2948258"/>
<dbReference type="Proteomes" id="UP000007021">
    <property type="component" value="Segment"/>
</dbReference>
<dbReference type="GO" id="GO:0033644">
    <property type="term" value="C:host cell membrane"/>
    <property type="evidence" value="ECO:0007669"/>
    <property type="project" value="UniProtKB-SubCell"/>
</dbReference>
<dbReference type="GO" id="GO:0016020">
    <property type="term" value="C:membrane"/>
    <property type="evidence" value="ECO:0007669"/>
    <property type="project" value="UniProtKB-KW"/>
</dbReference>
<organismHost>
    <name type="scientific">Magallana gigas</name>
    <name type="common">Pacific oyster</name>
    <name type="synonym">Crassostrea gigas</name>
    <dbReference type="NCBI Taxonomy" id="29159"/>
</organismHost>
<organismHost>
    <name type="scientific">Pecten maximus</name>
    <name type="common">King scallop</name>
    <name type="synonym">Pilgrim's clam</name>
    <dbReference type="NCBI Taxonomy" id="6579"/>
</organismHost>
<keyword id="KW-0325">Glycoprotein</keyword>
<keyword id="KW-1043">Host membrane</keyword>
<keyword id="KW-0472">Membrane</keyword>
<keyword id="KW-1185">Reference proteome</keyword>
<keyword id="KW-0812">Transmembrane</keyword>
<keyword id="KW-1133">Transmembrane helix</keyword>
<name>Y080_OSHVF</name>
<sequence length="116" mass="12878">MGDNTTVAPGTNQTLVEEDLGAQITHTLMVQIMSKLNEMLTEYQPQIIGIGATVLAIFVIMFISLLIILGCNCIRPYNFKNLKRYITGKASKSVEYQPLKMSAVNMGMDEDDEFLA</sequence>
<comment type="subcellular location">
    <subcellularLocation>
        <location evidence="2">Host membrane</location>
        <topology evidence="2">Single-pass membrane protein</topology>
    </subcellularLocation>
</comment>
<organism>
    <name type="scientific">Ostreid herpesvirus 1 (isolate France)</name>
    <name type="common">OsHV-1</name>
    <name type="synonym">Pacific oyster herpesvirus</name>
    <dbReference type="NCBI Taxonomy" id="654903"/>
    <lineage>
        <taxon>Viruses</taxon>
        <taxon>Duplodnaviria</taxon>
        <taxon>Heunggongvirae</taxon>
        <taxon>Peploviricota</taxon>
        <taxon>Herviviricetes</taxon>
        <taxon>Herpesvirales</taxon>
        <taxon>Malacoherpesviridae</taxon>
        <taxon>Ostreavirus</taxon>
        <taxon>Ostreavirus ostreidmalaco1</taxon>
        <taxon>Ostreid herpesvirus 1</taxon>
    </lineage>
</organism>
<proteinExistence type="predicted"/>